<feature type="chain" id="PRO_0000184495" description="Protein TCL1B5">
    <location>
        <begin position="1"/>
        <end position="121"/>
    </location>
</feature>
<reference key="1">
    <citation type="journal article" date="1999" name="Proc. Natl. Acad. Sci. U.S.A.">
        <title>Genomic analysis of human and mouse TCL1 loci reveals a complex of tightly clustered genes.</title>
        <authorList>
            <person name="Hallas C."/>
            <person name="Pekarsky Y."/>
            <person name="Itoyama T."/>
            <person name="Varnum J."/>
            <person name="Bichi R."/>
            <person name="Rothstein J.L."/>
            <person name="Croce C.M."/>
        </authorList>
    </citation>
    <scope>NUCLEOTIDE SEQUENCE [MRNA]</scope>
</reference>
<dbReference type="EMBL" id="AF195493">
    <property type="protein sequence ID" value="AAF12806.1"/>
    <property type="molecule type" value="mRNA"/>
</dbReference>
<dbReference type="CCDS" id="CCDS36546.1"/>
<dbReference type="RefSeq" id="NP_001348836.1">
    <property type="nucleotide sequence ID" value="NM_001361907.1"/>
</dbReference>
<dbReference type="RefSeq" id="NP_038804.1">
    <property type="nucleotide sequence ID" value="NM_013776.2"/>
</dbReference>
<dbReference type="RefSeq" id="XP_006516000.1">
    <property type="nucleotide sequence ID" value="XM_006515937.1"/>
</dbReference>
<dbReference type="SMR" id="P56845"/>
<dbReference type="FunCoup" id="P56845">
    <property type="interactions" value="4"/>
</dbReference>
<dbReference type="STRING" id="10090.ENSMUSP00000000717"/>
<dbReference type="PaxDb" id="10090-ENSMUSP00000000717"/>
<dbReference type="DNASU" id="27382"/>
<dbReference type="Ensembl" id="ENSMUST00000000717.9">
    <property type="protein sequence ID" value="ENSMUSP00000000717.8"/>
    <property type="gene ID" value="ENSMUSG00000000701.9"/>
</dbReference>
<dbReference type="GeneID" id="27382"/>
<dbReference type="KEGG" id="mmu:27382"/>
<dbReference type="UCSC" id="uc007oxy.1">
    <property type="organism name" value="mouse"/>
</dbReference>
<dbReference type="AGR" id="MGI:1351635"/>
<dbReference type="CTD" id="27382"/>
<dbReference type="MGI" id="MGI:1351635">
    <property type="gene designation" value="Tcl1b5"/>
</dbReference>
<dbReference type="VEuPathDB" id="HostDB:ENSMUSG00000000701"/>
<dbReference type="eggNOG" id="ENOG502TEDJ">
    <property type="taxonomic scope" value="Eukaryota"/>
</dbReference>
<dbReference type="GeneTree" id="ENSGT00390000006885"/>
<dbReference type="HOGENOM" id="CLU_168379_1_0_1"/>
<dbReference type="InParanoid" id="P56845"/>
<dbReference type="OMA" id="MWQMPVH"/>
<dbReference type="OrthoDB" id="9630488at2759"/>
<dbReference type="PhylomeDB" id="P56845"/>
<dbReference type="TreeFam" id="TF340217"/>
<dbReference type="BioGRID-ORCS" id="27382">
    <property type="hits" value="1 hit in 76 CRISPR screens"/>
</dbReference>
<dbReference type="PRO" id="PR:P56845"/>
<dbReference type="Proteomes" id="UP000000589">
    <property type="component" value="Chromosome 12"/>
</dbReference>
<dbReference type="RNAct" id="P56845">
    <property type="molecule type" value="protein"/>
</dbReference>
<dbReference type="Bgee" id="ENSMUSG00000000701">
    <property type="expression patterns" value="Expressed in animal zygote and 6 other cell types or tissues"/>
</dbReference>
<dbReference type="ExpressionAtlas" id="P56845">
    <property type="expression patterns" value="baseline and differential"/>
</dbReference>
<dbReference type="GO" id="GO:0043539">
    <property type="term" value="F:protein serine/threonine kinase activator activity"/>
    <property type="evidence" value="ECO:0007669"/>
    <property type="project" value="InterPro"/>
</dbReference>
<dbReference type="FunFam" id="2.40.15.10:FF:000004">
    <property type="entry name" value="Protein TCL1B4"/>
    <property type="match status" value="1"/>
</dbReference>
<dbReference type="Gene3D" id="2.40.15.10">
    <property type="entry name" value="TCL1/MTCP1"/>
    <property type="match status" value="1"/>
</dbReference>
<dbReference type="InterPro" id="IPR004832">
    <property type="entry name" value="TCL1_MTCP1"/>
</dbReference>
<dbReference type="InterPro" id="IPR036672">
    <property type="entry name" value="TCL1_MTCP1_sf"/>
</dbReference>
<dbReference type="PANTHER" id="PTHR14060">
    <property type="entry name" value="PROTEIN P13 MTCP-1"/>
    <property type="match status" value="1"/>
</dbReference>
<dbReference type="PANTHER" id="PTHR14060:SF2">
    <property type="entry name" value="T-CELL LEUKEMIA_LYMPHOMA PROTEIN 1B"/>
    <property type="match status" value="1"/>
</dbReference>
<dbReference type="Pfam" id="PF01840">
    <property type="entry name" value="TCL1_MTCP1"/>
    <property type="match status" value="1"/>
</dbReference>
<dbReference type="SUPFAM" id="SSF50904">
    <property type="entry name" value="Oncogene products"/>
    <property type="match status" value="1"/>
</dbReference>
<evidence type="ECO:0000305" key="1"/>
<comment type="similarity">
    <text evidence="1">Belongs to the TCL1 family.</text>
</comment>
<organism>
    <name type="scientific">Mus musculus</name>
    <name type="common">Mouse</name>
    <dbReference type="NCBI Taxonomy" id="10090"/>
    <lineage>
        <taxon>Eukaryota</taxon>
        <taxon>Metazoa</taxon>
        <taxon>Chordata</taxon>
        <taxon>Craniata</taxon>
        <taxon>Vertebrata</taxon>
        <taxon>Euteleostomi</taxon>
        <taxon>Mammalia</taxon>
        <taxon>Eutheria</taxon>
        <taxon>Euarchontoglires</taxon>
        <taxon>Glires</taxon>
        <taxon>Rodentia</taxon>
        <taxon>Myomorpha</taxon>
        <taxon>Muroidea</taxon>
        <taxon>Muridae</taxon>
        <taxon>Murinae</taxon>
        <taxon>Mus</taxon>
        <taxon>Mus</taxon>
    </lineage>
</organism>
<protein>
    <recommendedName>
        <fullName>Protein TCL1B5</fullName>
    </recommendedName>
</protein>
<sequence>MAAVSVDPQRPLPVLLVSVSLGIYEDEHHRVWIAVNVETSHSSHGNRIETCVTVHLQHMTTLPQEPTPQQPINNNSLPTMWRLESRNTYTGTDGTYWRLLDHSQMGDTVQLTLDIIIGEDD</sequence>
<gene>
    <name type="primary">Tcl1b5</name>
</gene>
<proteinExistence type="evidence at transcript level"/>
<accession>P56845</accession>
<keyword id="KW-1185">Reference proteome</keyword>
<name>TCLB5_MOUSE</name>